<proteinExistence type="inferred from homology"/>
<accession>A6UQB6</accession>
<gene>
    <name type="ordered locus">Mevan_0782</name>
</gene>
<keyword id="KW-0255">Endonuclease</keyword>
<keyword id="KW-0378">Hydrolase</keyword>
<keyword id="KW-0540">Nuclease</keyword>
<keyword id="KW-0819">tRNA processing</keyword>
<protein>
    <recommendedName>
        <fullName evidence="1">RNA-free ribonuclease P</fullName>
        <shortName evidence="1">RNA-free RNase P</shortName>
        <ecNumber evidence="1">3.1.26.5</ecNumber>
    </recommendedName>
    <alternativeName>
        <fullName evidence="1">Protein-only RNase P</fullName>
    </alternativeName>
</protein>
<comment type="function">
    <text evidence="1">RNA-free RNase P that catalyzes the removal of the 5'-leader sequence from pre-tRNA to produce the mature 5'-terminus.</text>
</comment>
<comment type="catalytic activity">
    <reaction evidence="1">
        <text>Endonucleolytic cleavage of RNA, removing 5'-extranucleotides from tRNA precursor.</text>
        <dbReference type="EC" id="3.1.26.5"/>
    </reaction>
</comment>
<comment type="similarity">
    <text evidence="1">Belongs to the HARP family.</text>
</comment>
<dbReference type="EC" id="3.1.26.5" evidence="1"/>
<dbReference type="EMBL" id="CP000742">
    <property type="protein sequence ID" value="ABR54688.1"/>
    <property type="molecule type" value="Genomic_DNA"/>
</dbReference>
<dbReference type="RefSeq" id="WP_011972590.1">
    <property type="nucleotide sequence ID" value="NC_009634.1"/>
</dbReference>
<dbReference type="SMR" id="A6UQB6"/>
<dbReference type="STRING" id="406327.Mevan_0782"/>
<dbReference type="GeneID" id="5325199"/>
<dbReference type="KEGG" id="mvn:Mevan_0782"/>
<dbReference type="eggNOG" id="arCOG00720">
    <property type="taxonomic scope" value="Archaea"/>
</dbReference>
<dbReference type="HOGENOM" id="CLU_109672_0_0_2"/>
<dbReference type="OrthoDB" id="95197at2157"/>
<dbReference type="Proteomes" id="UP000001107">
    <property type="component" value="Chromosome"/>
</dbReference>
<dbReference type="GO" id="GO:0004526">
    <property type="term" value="F:ribonuclease P activity"/>
    <property type="evidence" value="ECO:0007669"/>
    <property type="project" value="UniProtKB-UniRule"/>
</dbReference>
<dbReference type="GO" id="GO:0001682">
    <property type="term" value="P:tRNA 5'-leader removal"/>
    <property type="evidence" value="ECO:0007669"/>
    <property type="project" value="UniProtKB-UniRule"/>
</dbReference>
<dbReference type="CDD" id="cd18691">
    <property type="entry name" value="PIN_VapC-like"/>
    <property type="match status" value="1"/>
</dbReference>
<dbReference type="HAMAP" id="MF_01078">
    <property type="entry name" value="RNA_free_RNase_P"/>
    <property type="match status" value="1"/>
</dbReference>
<dbReference type="InterPro" id="IPR014856">
    <property type="entry name" value="RNA_free_RNase_P"/>
</dbReference>
<dbReference type="NCBIfam" id="NF003340">
    <property type="entry name" value="PRK04358.1-1"/>
    <property type="match status" value="1"/>
</dbReference>
<dbReference type="NCBIfam" id="NF003343">
    <property type="entry name" value="PRK04358.1-4"/>
    <property type="match status" value="1"/>
</dbReference>
<dbReference type="NCBIfam" id="TIGR03875">
    <property type="entry name" value="RNA_lig_partner"/>
    <property type="match status" value="1"/>
</dbReference>
<dbReference type="PANTHER" id="PTHR41173:SF1">
    <property type="entry name" value="RNA-FREE RIBONUCLEASE P"/>
    <property type="match status" value="1"/>
</dbReference>
<dbReference type="PANTHER" id="PTHR41173">
    <property type="entry name" value="UPF0278 PROTEIN TK1425"/>
    <property type="match status" value="1"/>
</dbReference>
<dbReference type="Pfam" id="PF08745">
    <property type="entry name" value="PIN_5"/>
    <property type="match status" value="1"/>
</dbReference>
<name>RFRNP_METVS</name>
<evidence type="ECO:0000255" key="1">
    <source>
        <dbReference type="HAMAP-Rule" id="MF_01078"/>
    </source>
</evidence>
<reference key="1">
    <citation type="submission" date="2007-06" db="EMBL/GenBank/DDBJ databases">
        <title>Complete sequence of Methanococcus vannielii SB.</title>
        <authorList>
            <consortium name="US DOE Joint Genome Institute"/>
            <person name="Copeland A."/>
            <person name="Lucas S."/>
            <person name="Lapidus A."/>
            <person name="Barry K."/>
            <person name="Glavina del Rio T."/>
            <person name="Dalin E."/>
            <person name="Tice H."/>
            <person name="Pitluck S."/>
            <person name="Chain P."/>
            <person name="Malfatti S."/>
            <person name="Shin M."/>
            <person name="Vergez L."/>
            <person name="Schmutz J."/>
            <person name="Larimer F."/>
            <person name="Land M."/>
            <person name="Hauser L."/>
            <person name="Kyrpides N."/>
            <person name="Anderson I."/>
            <person name="Sieprawska-Lupa M."/>
            <person name="Whitman W.B."/>
            <person name="Richardson P."/>
        </authorList>
    </citation>
    <scope>NUCLEOTIDE SEQUENCE [LARGE SCALE GENOMIC DNA]</scope>
    <source>
        <strain>ATCC 35089 / DSM 1224 / JCM 13029 / OCM 148 / SB</strain>
    </source>
</reference>
<sequence>MQKQRFCLDTTAITDSGVRKSLGATNISESAEKIMDIISKARVKLDISCHIPYNTVYNELIGFLNREGCKNEIIIKVDTWLVKKTPNRYEIKIPSEILYEYIKDLRERINKGMRISENAMYETALEAYILKKPEEKNKDDVLNEVLSKTVNNFRDKYRNALRGGTLDSAPDLDVLLLAKELDAAVVANDEGIEKWAQRLGLRFVNAKDFPFILQEYLDMWGKK</sequence>
<organism>
    <name type="scientific">Methanococcus vannielii (strain ATCC 35089 / DSM 1224 / JCM 13029 / OCM 148 / SB)</name>
    <dbReference type="NCBI Taxonomy" id="406327"/>
    <lineage>
        <taxon>Archaea</taxon>
        <taxon>Methanobacteriati</taxon>
        <taxon>Methanobacteriota</taxon>
        <taxon>Methanomada group</taxon>
        <taxon>Methanococci</taxon>
        <taxon>Methanococcales</taxon>
        <taxon>Methanococcaceae</taxon>
        <taxon>Methanococcus</taxon>
    </lineage>
</organism>
<feature type="chain" id="PRO_1000064803" description="RNA-free ribonuclease P">
    <location>
        <begin position="1"/>
        <end position="223"/>
    </location>
</feature>